<feature type="chain" id="PRO_0000178342" description="Small ribosomal subunit protein bS21">
    <location>
        <begin position="1"/>
        <end position="70"/>
    </location>
</feature>
<comment type="similarity">
    <text evidence="1">Belongs to the bacterial ribosomal protein bS21 family.</text>
</comment>
<gene>
    <name type="primary">rpsU</name>
    <name type="ordered locus">jhp_0509</name>
</gene>
<organism>
    <name type="scientific">Helicobacter pylori (strain J99 / ATCC 700824)</name>
    <name type="common">Campylobacter pylori J99</name>
    <dbReference type="NCBI Taxonomy" id="85963"/>
    <lineage>
        <taxon>Bacteria</taxon>
        <taxon>Pseudomonadati</taxon>
        <taxon>Campylobacterota</taxon>
        <taxon>Epsilonproteobacteria</taxon>
        <taxon>Campylobacterales</taxon>
        <taxon>Helicobacteraceae</taxon>
        <taxon>Helicobacter</taxon>
    </lineage>
</organism>
<dbReference type="EMBL" id="AE001439">
    <property type="protein sequence ID" value="AAD06085.1"/>
    <property type="molecule type" value="Genomic_DNA"/>
</dbReference>
<dbReference type="PIR" id="C71923">
    <property type="entry name" value="C71923"/>
</dbReference>
<dbReference type="RefSeq" id="WP_001117774.1">
    <property type="nucleotide sequence ID" value="NC_000921.1"/>
</dbReference>
<dbReference type="SMR" id="Q9ZLR9"/>
<dbReference type="KEGG" id="hpj:jhp_0509"/>
<dbReference type="eggNOG" id="COG0828">
    <property type="taxonomic scope" value="Bacteria"/>
</dbReference>
<dbReference type="Proteomes" id="UP000000804">
    <property type="component" value="Chromosome"/>
</dbReference>
<dbReference type="GO" id="GO:1990904">
    <property type="term" value="C:ribonucleoprotein complex"/>
    <property type="evidence" value="ECO:0007669"/>
    <property type="project" value="UniProtKB-KW"/>
</dbReference>
<dbReference type="GO" id="GO:0005840">
    <property type="term" value="C:ribosome"/>
    <property type="evidence" value="ECO:0007669"/>
    <property type="project" value="UniProtKB-KW"/>
</dbReference>
<dbReference type="GO" id="GO:0003735">
    <property type="term" value="F:structural constituent of ribosome"/>
    <property type="evidence" value="ECO:0007669"/>
    <property type="project" value="InterPro"/>
</dbReference>
<dbReference type="GO" id="GO:0006412">
    <property type="term" value="P:translation"/>
    <property type="evidence" value="ECO:0007669"/>
    <property type="project" value="UniProtKB-UniRule"/>
</dbReference>
<dbReference type="Gene3D" id="1.20.5.1150">
    <property type="entry name" value="Ribosomal protein S8"/>
    <property type="match status" value="1"/>
</dbReference>
<dbReference type="HAMAP" id="MF_00358">
    <property type="entry name" value="Ribosomal_bS21"/>
    <property type="match status" value="1"/>
</dbReference>
<dbReference type="InterPro" id="IPR001911">
    <property type="entry name" value="Ribosomal_bS21"/>
</dbReference>
<dbReference type="InterPro" id="IPR018278">
    <property type="entry name" value="Ribosomal_bS21_CS"/>
</dbReference>
<dbReference type="InterPro" id="IPR038380">
    <property type="entry name" value="Ribosomal_bS21_sf"/>
</dbReference>
<dbReference type="NCBIfam" id="TIGR00030">
    <property type="entry name" value="S21p"/>
    <property type="match status" value="1"/>
</dbReference>
<dbReference type="Pfam" id="PF01165">
    <property type="entry name" value="Ribosomal_S21"/>
    <property type="match status" value="1"/>
</dbReference>
<dbReference type="PRINTS" id="PR00976">
    <property type="entry name" value="RIBOSOMALS21"/>
</dbReference>
<dbReference type="PROSITE" id="PS01181">
    <property type="entry name" value="RIBOSOMAL_S21"/>
    <property type="match status" value="1"/>
</dbReference>
<evidence type="ECO:0000305" key="1"/>
<proteinExistence type="inferred from homology"/>
<name>RS21_HELPJ</name>
<accession>Q9ZLR9</accession>
<reference key="1">
    <citation type="journal article" date="1999" name="Nature">
        <title>Genomic sequence comparison of two unrelated isolates of the human gastric pathogen Helicobacter pylori.</title>
        <authorList>
            <person name="Alm R.A."/>
            <person name="Ling L.-S.L."/>
            <person name="Moir D.T."/>
            <person name="King B.L."/>
            <person name="Brown E.D."/>
            <person name="Doig P.C."/>
            <person name="Smith D.R."/>
            <person name="Noonan B."/>
            <person name="Guild B.C."/>
            <person name="deJonge B.L."/>
            <person name="Carmel G."/>
            <person name="Tummino P.J."/>
            <person name="Caruso A."/>
            <person name="Uria-Nickelsen M."/>
            <person name="Mills D.M."/>
            <person name="Ives C."/>
            <person name="Gibson R."/>
            <person name="Merberg D."/>
            <person name="Mills S.D."/>
            <person name="Jiang Q."/>
            <person name="Taylor D.E."/>
            <person name="Vovis G.F."/>
            <person name="Trust T.J."/>
        </authorList>
    </citation>
    <scope>NUCLEOTIDE SEQUENCE [LARGE SCALE GENOMIC DNA]</scope>
    <source>
        <strain>J99 / ATCC 700824</strain>
    </source>
</reference>
<keyword id="KW-0687">Ribonucleoprotein</keyword>
<keyword id="KW-0689">Ribosomal protein</keyword>
<protein>
    <recommendedName>
        <fullName evidence="1">Small ribosomal subunit protein bS21</fullName>
    </recommendedName>
    <alternativeName>
        <fullName>30S ribosomal protein S21</fullName>
    </alternativeName>
</protein>
<sequence length="70" mass="8614">MPGIKVREGDAFDEAYRRFKKQTDRNLVVTECRARRFFESKTEKRKKQKISAKKEVLKRLYMLRRYESRL</sequence>